<reference key="1">
    <citation type="journal article" date="2006" name="Science">
        <title>The genome of black cottonwood, Populus trichocarpa (Torr. &amp; Gray).</title>
        <authorList>
            <person name="Tuskan G.A."/>
            <person name="Difazio S."/>
            <person name="Jansson S."/>
            <person name="Bohlmann J."/>
            <person name="Grigoriev I."/>
            <person name="Hellsten U."/>
            <person name="Putnam N."/>
            <person name="Ralph S."/>
            <person name="Rombauts S."/>
            <person name="Salamov A."/>
            <person name="Schein J."/>
            <person name="Sterck L."/>
            <person name="Aerts A."/>
            <person name="Bhalerao R.R."/>
            <person name="Bhalerao R.P."/>
            <person name="Blaudez D."/>
            <person name="Boerjan W."/>
            <person name="Brun A."/>
            <person name="Brunner A."/>
            <person name="Busov V."/>
            <person name="Campbell M."/>
            <person name="Carlson J."/>
            <person name="Chalot M."/>
            <person name="Chapman J."/>
            <person name="Chen G.-L."/>
            <person name="Cooper D."/>
            <person name="Coutinho P.M."/>
            <person name="Couturier J."/>
            <person name="Covert S."/>
            <person name="Cronk Q."/>
            <person name="Cunningham R."/>
            <person name="Davis J."/>
            <person name="Degroeve S."/>
            <person name="Dejardin A."/>
            <person name="dePamphilis C.W."/>
            <person name="Detter J."/>
            <person name="Dirks B."/>
            <person name="Dubchak I."/>
            <person name="Duplessis S."/>
            <person name="Ehlting J."/>
            <person name="Ellis B."/>
            <person name="Gendler K."/>
            <person name="Goodstein D."/>
            <person name="Gribskov M."/>
            <person name="Grimwood J."/>
            <person name="Groover A."/>
            <person name="Gunter L."/>
            <person name="Hamberger B."/>
            <person name="Heinze B."/>
            <person name="Helariutta Y."/>
            <person name="Henrissat B."/>
            <person name="Holligan D."/>
            <person name="Holt R."/>
            <person name="Huang W."/>
            <person name="Islam-Faridi N."/>
            <person name="Jones S."/>
            <person name="Jones-Rhoades M."/>
            <person name="Jorgensen R."/>
            <person name="Joshi C."/>
            <person name="Kangasjaervi J."/>
            <person name="Karlsson J."/>
            <person name="Kelleher C."/>
            <person name="Kirkpatrick R."/>
            <person name="Kirst M."/>
            <person name="Kohler A."/>
            <person name="Kalluri U."/>
            <person name="Larimer F."/>
            <person name="Leebens-Mack J."/>
            <person name="Leple J.-C."/>
            <person name="Locascio P."/>
            <person name="Lou Y."/>
            <person name="Lucas S."/>
            <person name="Martin F."/>
            <person name="Montanini B."/>
            <person name="Napoli C."/>
            <person name="Nelson D.R."/>
            <person name="Nelson C."/>
            <person name="Nieminen K."/>
            <person name="Nilsson O."/>
            <person name="Pereda V."/>
            <person name="Peter G."/>
            <person name="Philippe R."/>
            <person name="Pilate G."/>
            <person name="Poliakov A."/>
            <person name="Razumovskaya J."/>
            <person name="Richardson P."/>
            <person name="Rinaldi C."/>
            <person name="Ritland K."/>
            <person name="Rouze P."/>
            <person name="Ryaboy D."/>
            <person name="Schmutz J."/>
            <person name="Schrader J."/>
            <person name="Segerman B."/>
            <person name="Shin H."/>
            <person name="Siddiqui A."/>
            <person name="Sterky F."/>
            <person name="Terry A."/>
            <person name="Tsai C.-J."/>
            <person name="Uberbacher E."/>
            <person name="Unneberg P."/>
            <person name="Vahala J."/>
            <person name="Wall K."/>
            <person name="Wessler S."/>
            <person name="Yang G."/>
            <person name="Yin T."/>
            <person name="Douglas C."/>
            <person name="Marra M."/>
            <person name="Sandberg G."/>
            <person name="Van de Peer Y."/>
            <person name="Rokhsar D.S."/>
        </authorList>
    </citation>
    <scope>NUCLEOTIDE SEQUENCE [LARGE SCALE GENOMIC DNA]</scope>
    <source>
        <strain>cv. Nisqually</strain>
    </source>
</reference>
<reference key="2">
    <citation type="journal article" date="2010" name="Cell. Mol. Life Sci.">
        <title>Genome-wide analysis of plant metal transporters, with an emphasis on poplar.</title>
        <authorList>
            <person name="Migeon A."/>
            <person name="Blaudez D."/>
            <person name="Wilkins O."/>
            <person name="Montanini B."/>
            <person name="Campbell M.M."/>
            <person name="Richaud P."/>
            <person name="Thomine S."/>
            <person name="Chalot M."/>
        </authorList>
    </citation>
    <scope>GENE FAMILY</scope>
    <scope>NOMENCLATURE</scope>
</reference>
<reference key="3">
    <citation type="journal article" date="2022" name="Mol. Biol. Evol.">
        <title>Duplication of NRAMP3 gene in poplars generated two homologous transporters with distinct functions.</title>
        <authorList>
            <person name="Pottier M."/>
            <person name="Le Thi V.A."/>
            <person name="Primard-Brisset C."/>
            <person name="Marion J."/>
            <person name="Bianchi M.W."/>
            <person name="Victor C."/>
            <person name="Dejardin A."/>
            <person name="Pilate G."/>
            <person name="Thomine S."/>
        </authorList>
    </citation>
    <scope>GENE FAMILY</scope>
    <source>
        <strain>cv. Nisqually</strain>
    </source>
</reference>
<dbReference type="EMBL" id="CM009291">
    <property type="protein sequence ID" value="PNT48458.1"/>
    <property type="molecule type" value="Genomic_DNA"/>
</dbReference>
<dbReference type="SMR" id="A0A2K2BF92"/>
<dbReference type="InParanoid" id="A0A2K2BF92"/>
<dbReference type="Proteomes" id="UP000006729">
    <property type="component" value="Chromosome 2"/>
</dbReference>
<dbReference type="GO" id="GO:0005886">
    <property type="term" value="C:plasma membrane"/>
    <property type="evidence" value="ECO:0000318"/>
    <property type="project" value="GO_Central"/>
</dbReference>
<dbReference type="GO" id="GO:0015086">
    <property type="term" value="F:cadmium ion transmembrane transporter activity"/>
    <property type="evidence" value="ECO:0000318"/>
    <property type="project" value="GO_Central"/>
</dbReference>
<dbReference type="GO" id="GO:0005384">
    <property type="term" value="F:manganese ion transmembrane transporter activity"/>
    <property type="evidence" value="ECO:0000318"/>
    <property type="project" value="GO_Central"/>
</dbReference>
<dbReference type="GO" id="GO:0034755">
    <property type="term" value="P:iron ion transmembrane transport"/>
    <property type="evidence" value="ECO:0000318"/>
    <property type="project" value="GO_Central"/>
</dbReference>
<dbReference type="GO" id="GO:0006828">
    <property type="term" value="P:manganese ion transport"/>
    <property type="evidence" value="ECO:0000318"/>
    <property type="project" value="GO_Central"/>
</dbReference>
<dbReference type="HAMAP" id="MF_00221">
    <property type="entry name" value="NRAMP"/>
    <property type="match status" value="1"/>
</dbReference>
<dbReference type="InterPro" id="IPR001046">
    <property type="entry name" value="NRAMP_fam"/>
</dbReference>
<dbReference type="NCBIfam" id="TIGR01197">
    <property type="entry name" value="nramp"/>
    <property type="match status" value="1"/>
</dbReference>
<dbReference type="NCBIfam" id="NF037982">
    <property type="entry name" value="Nramp_1"/>
    <property type="match status" value="1"/>
</dbReference>
<dbReference type="NCBIfam" id="NF001923">
    <property type="entry name" value="PRK00701.1"/>
    <property type="match status" value="1"/>
</dbReference>
<dbReference type="PANTHER" id="PTHR11706:SF77">
    <property type="entry name" value="METAL TRANSPORTER NRAMP5"/>
    <property type="match status" value="1"/>
</dbReference>
<dbReference type="PANTHER" id="PTHR11706">
    <property type="entry name" value="SOLUTE CARRIER PROTEIN FAMILY 11 MEMBER"/>
    <property type="match status" value="1"/>
</dbReference>
<dbReference type="Pfam" id="PF01566">
    <property type="entry name" value="Nramp"/>
    <property type="match status" value="1"/>
</dbReference>
<dbReference type="PRINTS" id="PR00447">
    <property type="entry name" value="NATRESASSCMP"/>
</dbReference>
<evidence type="ECO:0000255" key="1"/>
<evidence type="ECO:0000255" key="2">
    <source>
        <dbReference type="PROSITE-ProRule" id="PRU00498"/>
    </source>
</evidence>
<evidence type="ECO:0000256" key="3">
    <source>
        <dbReference type="SAM" id="MobiDB-lite"/>
    </source>
</evidence>
<evidence type="ECO:0000303" key="4">
    <source>
    </source>
</evidence>
<evidence type="ECO:0000303" key="5">
    <source>
    </source>
</evidence>
<evidence type="ECO:0000305" key="6"/>
<proteinExistence type="inferred from homology"/>
<organism>
    <name type="scientific">Populus trichocarpa</name>
    <name type="common">Western balsam poplar</name>
    <name type="synonym">Populus balsamifera subsp. trichocarpa</name>
    <dbReference type="NCBI Taxonomy" id="3694"/>
    <lineage>
        <taxon>Eukaryota</taxon>
        <taxon>Viridiplantae</taxon>
        <taxon>Streptophyta</taxon>
        <taxon>Embryophyta</taxon>
        <taxon>Tracheophyta</taxon>
        <taxon>Spermatophyta</taxon>
        <taxon>Magnoliopsida</taxon>
        <taxon>eudicotyledons</taxon>
        <taxon>Gunneridae</taxon>
        <taxon>Pentapetalae</taxon>
        <taxon>rosids</taxon>
        <taxon>fabids</taxon>
        <taxon>Malpighiales</taxon>
        <taxon>Salicaceae</taxon>
        <taxon>Saliceae</taxon>
        <taxon>Populus</taxon>
    </lineage>
</organism>
<feature type="chain" id="PRO_0000457940" description="Metal transporter Nramp6.1">
    <location>
        <begin position="1"/>
        <end position="552"/>
    </location>
</feature>
<feature type="transmembrane region" description="Helical; Name=1" evidence="1">
    <location>
        <begin position="55"/>
        <end position="75"/>
    </location>
</feature>
<feature type="transmembrane region" description="Helical; Name=2" evidence="1">
    <location>
        <begin position="88"/>
        <end position="108"/>
    </location>
</feature>
<feature type="transmembrane region" description="Helical; Name=3" evidence="1">
    <location>
        <begin position="133"/>
        <end position="155"/>
    </location>
</feature>
<feature type="transmembrane region" description="Helical; Name=4" evidence="1">
    <location>
        <begin position="159"/>
        <end position="181"/>
    </location>
</feature>
<feature type="transmembrane region" description="Helical; Name=5" evidence="1">
    <location>
        <begin position="189"/>
        <end position="209"/>
    </location>
</feature>
<feature type="transmembrane region" description="Helical; Name=6" evidence="1">
    <location>
        <begin position="238"/>
        <end position="258"/>
    </location>
</feature>
<feature type="transmembrane region" description="Helical; Name=7" evidence="1">
    <location>
        <begin position="275"/>
        <end position="295"/>
    </location>
</feature>
<feature type="transmembrane region" description="Helical; Name=8" evidence="1">
    <location>
        <begin position="338"/>
        <end position="358"/>
    </location>
</feature>
<feature type="transmembrane region" description="Helical; Name=9" evidence="1">
    <location>
        <begin position="377"/>
        <end position="397"/>
    </location>
</feature>
<feature type="transmembrane region" description="Helical; Name=10" evidence="1">
    <location>
        <begin position="402"/>
        <end position="422"/>
    </location>
</feature>
<feature type="transmembrane region" description="Helical; Name=11" evidence="1">
    <location>
        <begin position="438"/>
        <end position="458"/>
    </location>
</feature>
<feature type="transmembrane region" description="Helical; Name=12" evidence="1">
    <location>
        <begin position="478"/>
        <end position="498"/>
    </location>
</feature>
<feature type="region of interest" description="Disordered" evidence="3">
    <location>
        <begin position="511"/>
        <end position="552"/>
    </location>
</feature>
<feature type="compositionally biased region" description="Polar residues" evidence="3">
    <location>
        <begin position="514"/>
        <end position="523"/>
    </location>
</feature>
<feature type="compositionally biased region" description="Basic and acidic residues" evidence="3">
    <location>
        <begin position="535"/>
        <end position="545"/>
    </location>
</feature>
<feature type="glycosylation site" description="N-linked (GlcNAc...) asparagine" evidence="2">
    <location>
        <position position="11"/>
    </location>
</feature>
<feature type="glycosylation site" description="N-linked (GlcNAc...) asparagine" evidence="2">
    <location>
        <position position="306"/>
    </location>
</feature>
<accession>A0A2K2BF92</accession>
<sequence>MAGIQQQQLVNDTLPASWDGSSKRTAAVNVEGHPRPCIDHELKDPSHQKSGWRKFLSYVGPGFLVSLAYLDPGNLETDLQAGANHRYELLWVVLVGLIFALTIQSLAANLGVSTGKHLSELCRAEYPRHVKYCLWLLAEIAVMAADIPEVIGTAFALNILFNIPVWFGVLCTGCSTLLLLGLQKYGVRKLELLIAVLVFVMAACFFGEMRYVKPPATDVLKGMFIPKLSGQGSTGDAIALLGALVMPHNLFLHSALVLSRKTPNSVRGINDACRYFLIESGLALFVAFLINLAVISVSGTVCSAQNLSSENADRCGDLTLNSASFLLQNVLGKSSSKIYAIAVLASGQSSTITGTYAGQYIMEGFLELRMRKWIRNLVTRCIAITPSLIVSIIGGSSGAGRLIIIASMILSFELPFALIPLLKFSSSTTKMGPHKNSIYIIVLSWILGLGIIGINIYYLSTGFVGWLIDNNLPKVANVFIGIIVFPLMAIYILAVIYLTFRKDTVVTFMEPNKNDPQQQTNMENGLAKSTEGPEMVDRAPYREDLADIPLPE</sequence>
<keyword id="KW-0325">Glycoprotein</keyword>
<keyword id="KW-0406">Ion transport</keyword>
<keyword id="KW-0472">Membrane</keyword>
<keyword id="KW-1185">Reference proteome</keyword>
<keyword id="KW-0812">Transmembrane</keyword>
<keyword id="KW-1133">Transmembrane helix</keyword>
<keyword id="KW-0813">Transport</keyword>
<name>NRP61_POPTR</name>
<comment type="function">
    <text evidence="4">Probable divalent metal transporter.</text>
</comment>
<comment type="subcellular location">
    <subcellularLocation>
        <location evidence="1">Membrane</location>
        <topology evidence="1">Multi-pass membrane protein</topology>
    </subcellularLocation>
</comment>
<comment type="similarity">
    <text evidence="6">Belongs to the NRAMP (TC 2.A.55) family.</text>
</comment>
<gene>
    <name evidence="4 5" type="primary">NRAMP6.1</name>
    <name evidence="6" type="ordered locus">Potri.002G080400</name>
</gene>
<protein>
    <recommendedName>
        <fullName evidence="4 5">Metal transporter Nramp6.1</fullName>
        <shortName evidence="5">PotriNRAMP6.1</shortName>
        <shortName evidence="4">PtNRAMP6.1</shortName>
    </recommendedName>
    <alternativeName>
        <fullName evidence="6">Natural resistance-associated macrophage protein 6.1</fullName>
    </alternativeName>
</protein>